<comment type="similarity">
    <text evidence="2">Belongs to the mannitol dehydrogenase family. UxuB subfamily.</text>
</comment>
<reference key="1">
    <citation type="submission" date="1993-10" db="EMBL/GenBank/DDBJ databases">
        <title>Automated multiplex sequencing of the E.coli genome.</title>
        <authorList>
            <person name="Richterich P."/>
            <person name="Lakey N."/>
            <person name="Gryan G."/>
            <person name="Jaehn L."/>
            <person name="Mintz L."/>
            <person name="Robison K."/>
            <person name="Church G.M."/>
        </authorList>
    </citation>
    <scope>NUCLEOTIDE SEQUENCE [LARGE SCALE GENOMIC DNA]</scope>
    <source>
        <strain>K12 / BHB2600</strain>
    </source>
</reference>
<reference key="2">
    <citation type="journal article" date="1996" name="DNA Res.">
        <title>A 460-kb DNA sequence of the Escherichia coli K-12 genome corresponding to the 40.1-50.0 min region on the linkage map.</title>
        <authorList>
            <person name="Itoh T."/>
            <person name="Aiba H."/>
            <person name="Baba T."/>
            <person name="Fujita K."/>
            <person name="Hayashi K."/>
            <person name="Inada T."/>
            <person name="Isono K."/>
            <person name="Kasai H."/>
            <person name="Kimura S."/>
            <person name="Kitakawa M."/>
            <person name="Kitagawa M."/>
            <person name="Makino K."/>
            <person name="Miki T."/>
            <person name="Mizobuchi K."/>
            <person name="Mori H."/>
            <person name="Mori T."/>
            <person name="Motomura K."/>
            <person name="Nakade S."/>
            <person name="Nakamura Y."/>
            <person name="Nashimoto H."/>
            <person name="Nishio Y."/>
            <person name="Oshima T."/>
            <person name="Saito N."/>
            <person name="Sampei G."/>
            <person name="Seki Y."/>
            <person name="Sivasundaram S."/>
            <person name="Tagami H."/>
            <person name="Takeda J."/>
            <person name="Takemoto K."/>
            <person name="Wada C."/>
            <person name="Yamamoto Y."/>
            <person name="Horiuchi T."/>
        </authorList>
    </citation>
    <scope>NUCLEOTIDE SEQUENCE [LARGE SCALE GENOMIC DNA]</scope>
    <source>
        <strain>K12 / W3110 / ATCC 27325 / DSM 5911</strain>
    </source>
</reference>
<reference key="3">
    <citation type="journal article" date="1997" name="Science">
        <title>The complete genome sequence of Escherichia coli K-12.</title>
        <authorList>
            <person name="Blattner F.R."/>
            <person name="Plunkett G. III"/>
            <person name="Bloch C.A."/>
            <person name="Perna N.T."/>
            <person name="Burland V."/>
            <person name="Riley M."/>
            <person name="Collado-Vides J."/>
            <person name="Glasner J.D."/>
            <person name="Rode C.K."/>
            <person name="Mayhew G.F."/>
            <person name="Gregor J."/>
            <person name="Davis N.W."/>
            <person name="Kirkpatrick H.A."/>
            <person name="Goeden M.A."/>
            <person name="Rose D.J."/>
            <person name="Mau B."/>
            <person name="Shao Y."/>
        </authorList>
    </citation>
    <scope>NUCLEOTIDE SEQUENCE [LARGE SCALE GENOMIC DNA]</scope>
    <source>
        <strain>K12 / MG1655 / ATCC 47076</strain>
    </source>
</reference>
<reference key="4">
    <citation type="journal article" date="2006" name="Mol. Syst. Biol.">
        <title>Highly accurate genome sequences of Escherichia coli K-12 strains MG1655 and W3110.</title>
        <authorList>
            <person name="Hayashi K."/>
            <person name="Morooka N."/>
            <person name="Yamamoto Y."/>
            <person name="Fujita K."/>
            <person name="Isono K."/>
            <person name="Choi S."/>
            <person name="Ohtsubo E."/>
            <person name="Baba T."/>
            <person name="Wanner B.L."/>
            <person name="Mori H."/>
            <person name="Horiuchi T."/>
        </authorList>
    </citation>
    <scope>NUCLEOTIDE SEQUENCE [LARGE SCALE GENOMIC DNA]</scope>
    <scope>SEQUENCE REVISION TO 48</scope>
    <source>
        <strain>K12 / W3110 / ATCC 27325 / DSM 5911</strain>
    </source>
</reference>
<organism>
    <name type="scientific">Escherichia coli (strain K12)</name>
    <dbReference type="NCBI Taxonomy" id="83333"/>
    <lineage>
        <taxon>Bacteria</taxon>
        <taxon>Pseudomonadati</taxon>
        <taxon>Pseudomonadota</taxon>
        <taxon>Gammaproteobacteria</taxon>
        <taxon>Enterobacterales</taxon>
        <taxon>Enterobacteriaceae</taxon>
        <taxon>Escherichia</taxon>
    </lineage>
</organism>
<dbReference type="EC" id="1.-.-.-"/>
<dbReference type="EMBL" id="U00007">
    <property type="protein sequence ID" value="AAA60520.1"/>
    <property type="molecule type" value="Genomic_DNA"/>
</dbReference>
<dbReference type="EMBL" id="U00096">
    <property type="protein sequence ID" value="AAC75233.1"/>
    <property type="molecule type" value="Genomic_DNA"/>
</dbReference>
<dbReference type="EMBL" id="AP009048">
    <property type="protein sequence ID" value="BAA15981.2"/>
    <property type="molecule type" value="Genomic_DNA"/>
</dbReference>
<dbReference type="PIR" id="C64986">
    <property type="entry name" value="C64986"/>
</dbReference>
<dbReference type="RefSeq" id="NP_416677.1">
    <property type="nucleotide sequence ID" value="NC_000913.3"/>
</dbReference>
<dbReference type="RefSeq" id="WP_001091940.1">
    <property type="nucleotide sequence ID" value="NZ_LN832404.1"/>
</dbReference>
<dbReference type="SMR" id="P33029"/>
<dbReference type="BioGRID" id="4260467">
    <property type="interactions" value="11"/>
</dbReference>
<dbReference type="FunCoup" id="P33029">
    <property type="interactions" value="5"/>
</dbReference>
<dbReference type="STRING" id="511145.b2172"/>
<dbReference type="jPOST" id="P33029"/>
<dbReference type="PaxDb" id="511145-b2172"/>
<dbReference type="EnsemblBacteria" id="AAC75233">
    <property type="protein sequence ID" value="AAC75233"/>
    <property type="gene ID" value="b2172"/>
</dbReference>
<dbReference type="GeneID" id="946688"/>
<dbReference type="KEGG" id="ecj:JW2160"/>
<dbReference type="KEGG" id="eco:b2172"/>
<dbReference type="PATRIC" id="fig|1411691.4.peg.64"/>
<dbReference type="EchoBASE" id="EB1971"/>
<dbReference type="eggNOG" id="COG0246">
    <property type="taxonomic scope" value="Bacteria"/>
</dbReference>
<dbReference type="HOGENOM" id="CLU_027324_0_1_6"/>
<dbReference type="InParanoid" id="P33029"/>
<dbReference type="OMA" id="PWEQMKL"/>
<dbReference type="OrthoDB" id="271711at2"/>
<dbReference type="PhylomeDB" id="P33029"/>
<dbReference type="BioCyc" id="EcoCyc:EG12036-MONOMER"/>
<dbReference type="PRO" id="PR:P33029"/>
<dbReference type="Proteomes" id="UP000000625">
    <property type="component" value="Chromosome"/>
</dbReference>
<dbReference type="GO" id="GO:0016616">
    <property type="term" value="F:oxidoreductase activity, acting on the CH-OH group of donors, NAD or NADP as acceptor"/>
    <property type="evidence" value="ECO:0000318"/>
    <property type="project" value="GO_Central"/>
</dbReference>
<dbReference type="GO" id="GO:0019594">
    <property type="term" value="P:mannitol metabolic process"/>
    <property type="evidence" value="ECO:0007669"/>
    <property type="project" value="InterPro"/>
</dbReference>
<dbReference type="FunFam" id="3.40.50.720:FF:000129">
    <property type="entry name" value="D-mannonate oxidoreductase"/>
    <property type="match status" value="1"/>
</dbReference>
<dbReference type="Gene3D" id="1.10.1040.10">
    <property type="entry name" value="N-(1-d-carboxylethyl)-l-norvaline Dehydrogenase, domain 2"/>
    <property type="match status" value="1"/>
</dbReference>
<dbReference type="Gene3D" id="3.40.50.720">
    <property type="entry name" value="NAD(P)-binding Rossmann-like Domain"/>
    <property type="match status" value="1"/>
</dbReference>
<dbReference type="InterPro" id="IPR008927">
    <property type="entry name" value="6-PGluconate_DH-like_C_sf"/>
</dbReference>
<dbReference type="InterPro" id="IPR013328">
    <property type="entry name" value="6PGD_dom2"/>
</dbReference>
<dbReference type="InterPro" id="IPR000669">
    <property type="entry name" value="Mannitol_DH"/>
</dbReference>
<dbReference type="InterPro" id="IPR050988">
    <property type="entry name" value="Mannitol_DH/Oxidoreductase"/>
</dbReference>
<dbReference type="InterPro" id="IPR013118">
    <property type="entry name" value="Mannitol_DH_C"/>
</dbReference>
<dbReference type="InterPro" id="IPR023027">
    <property type="entry name" value="Mannitol_DH_CS"/>
</dbReference>
<dbReference type="InterPro" id="IPR013131">
    <property type="entry name" value="Mannitol_DH_N"/>
</dbReference>
<dbReference type="InterPro" id="IPR036291">
    <property type="entry name" value="NAD(P)-bd_dom_sf"/>
</dbReference>
<dbReference type="NCBIfam" id="NF011611">
    <property type="entry name" value="PRK15037.1"/>
    <property type="match status" value="1"/>
</dbReference>
<dbReference type="PANTHER" id="PTHR43362:SF1">
    <property type="entry name" value="MANNITOL DEHYDROGENASE 2-RELATED"/>
    <property type="match status" value="1"/>
</dbReference>
<dbReference type="PANTHER" id="PTHR43362">
    <property type="entry name" value="MANNITOL DEHYDROGENASE DSF1-RELATED"/>
    <property type="match status" value="1"/>
</dbReference>
<dbReference type="Pfam" id="PF01232">
    <property type="entry name" value="Mannitol_dh"/>
    <property type="match status" value="1"/>
</dbReference>
<dbReference type="Pfam" id="PF08125">
    <property type="entry name" value="Mannitol_dh_C"/>
    <property type="match status" value="1"/>
</dbReference>
<dbReference type="PRINTS" id="PR00084">
    <property type="entry name" value="MTLDHDRGNASE"/>
</dbReference>
<dbReference type="SUPFAM" id="SSF48179">
    <property type="entry name" value="6-phosphogluconate dehydrogenase C-terminal domain-like"/>
    <property type="match status" value="1"/>
</dbReference>
<dbReference type="SUPFAM" id="SSF51735">
    <property type="entry name" value="NAD(P)-binding Rossmann-fold domains"/>
    <property type="match status" value="1"/>
</dbReference>
<dbReference type="PROSITE" id="PS00974">
    <property type="entry name" value="MANNITOL_DHGENASE"/>
    <property type="match status" value="1"/>
</dbReference>
<accession>P33029</accession>
<accession>P94760</accession>
<gene>
    <name type="primary">yeiQ</name>
    <name type="ordered locus">b2172</name>
    <name type="ordered locus">JW2160</name>
</gene>
<feature type="chain" id="PRO_0000170749" description="Uncharacterized oxidoreductase YeiQ">
    <location>
        <begin position="1"/>
        <end position="488"/>
    </location>
</feature>
<feature type="binding site" evidence="1">
    <location>
        <begin position="27"/>
        <end position="38"/>
    </location>
    <ligand>
        <name>NAD(+)</name>
        <dbReference type="ChEBI" id="CHEBI:57540"/>
    </ligand>
</feature>
<feature type="sequence conflict" description="In Ref. 2." evidence="2" ref="2">
    <original>L</original>
    <variation>R</variation>
    <location>
        <position position="48"/>
    </location>
</feature>
<sequence>MNTIASVTLPHHVHAPRYDRQQLQSRIVHFGFGAFHRAHQALLTDRVLNAQGGDWGICEISLFSGDQLMSQLRAQNHLYTVLEKGADGNQVIIVGAVHECLNAKLDSLAAIIEKFCEPQVAIVSLTITEKGYCIDPATGALDTSNPRIIHDLQTPEEPHSAPGILVEALKRRRERGLTPFTVLSCDNIPDNGHVVKNAVLGMAEKRSPELAGWIKEHVSFPGTMVDRIVPAATDESLVEISQHLGVNDPCAISCEPFIQWVVEDNFVAGRPAWEVAGVQMVNDVLPWEEMKLRMLNGSHSFLAYLGYLSGFAHISDCMQDRAFRHAARTLMLDEQAPTLQIKDVDLTQYADKLIARFANPALKHKTWQIAMDGSQKLPQRMLAGIRIHQGRETDWSLLALGVAGWMRYVSGVDDAGNAIDVRDPLSDKIRELVAGSSSEQRVTALLSLREVFGDDLPDNPHFVQAIEQAWQQIVQFGAHQALLNTLKI</sequence>
<evidence type="ECO:0000250" key="1"/>
<evidence type="ECO:0000305" key="2"/>
<name>YEIQ_ECOLI</name>
<proteinExistence type="inferred from homology"/>
<keyword id="KW-0520">NAD</keyword>
<keyword id="KW-0560">Oxidoreductase</keyword>
<keyword id="KW-1185">Reference proteome</keyword>
<protein>
    <recommendedName>
        <fullName>Uncharacterized oxidoreductase YeiQ</fullName>
        <ecNumber>1.-.-.-</ecNumber>
    </recommendedName>
</protein>